<evidence type="ECO:0000255" key="1">
    <source>
        <dbReference type="HAMAP-Rule" id="MF_01077"/>
    </source>
</evidence>
<comment type="function">
    <text evidence="1">Required for maturation of 30S ribosomal subunits.</text>
</comment>
<comment type="subcellular location">
    <subcellularLocation>
        <location evidence="1">Cytoplasm</location>
    </subcellularLocation>
</comment>
<comment type="similarity">
    <text evidence="1">Belongs to the RimP family.</text>
</comment>
<name>RIMP_CAMHC</name>
<accession>A7I3U8</accession>
<keyword id="KW-0963">Cytoplasm</keyword>
<keyword id="KW-1185">Reference proteome</keyword>
<keyword id="KW-0690">Ribosome biogenesis</keyword>
<organism>
    <name type="scientific">Campylobacter hominis (strain ATCC BAA-381 / DSM 21671 / CCUG 45161 / LMG 19568 / NCTC 13146 / CH001A)</name>
    <dbReference type="NCBI Taxonomy" id="360107"/>
    <lineage>
        <taxon>Bacteria</taxon>
        <taxon>Pseudomonadati</taxon>
        <taxon>Campylobacterota</taxon>
        <taxon>Epsilonproteobacteria</taxon>
        <taxon>Campylobacterales</taxon>
        <taxon>Campylobacteraceae</taxon>
        <taxon>Campylobacter</taxon>
    </lineage>
</organism>
<protein>
    <recommendedName>
        <fullName evidence="1">Ribosome maturation factor RimP</fullName>
    </recommendedName>
</protein>
<gene>
    <name evidence="1" type="primary">rimP</name>
    <name type="ordered locus">CHAB381_1677</name>
</gene>
<feature type="chain" id="PRO_0000384621" description="Ribosome maturation factor RimP">
    <location>
        <begin position="1"/>
        <end position="140"/>
    </location>
</feature>
<dbReference type="EMBL" id="CP000776">
    <property type="protein sequence ID" value="ABS51906.1"/>
    <property type="molecule type" value="Genomic_DNA"/>
</dbReference>
<dbReference type="SMR" id="A7I3U8"/>
<dbReference type="STRING" id="360107.CHAB381_1677"/>
<dbReference type="KEGG" id="cha:CHAB381_1677"/>
<dbReference type="eggNOG" id="COG0779">
    <property type="taxonomic scope" value="Bacteria"/>
</dbReference>
<dbReference type="HOGENOM" id="CLU_070525_2_2_7"/>
<dbReference type="OrthoDB" id="9805006at2"/>
<dbReference type="Proteomes" id="UP000002407">
    <property type="component" value="Chromosome"/>
</dbReference>
<dbReference type="GO" id="GO:0005829">
    <property type="term" value="C:cytosol"/>
    <property type="evidence" value="ECO:0007669"/>
    <property type="project" value="TreeGrafter"/>
</dbReference>
<dbReference type="GO" id="GO:0000028">
    <property type="term" value="P:ribosomal small subunit assembly"/>
    <property type="evidence" value="ECO:0007669"/>
    <property type="project" value="TreeGrafter"/>
</dbReference>
<dbReference type="GO" id="GO:0006412">
    <property type="term" value="P:translation"/>
    <property type="evidence" value="ECO:0007669"/>
    <property type="project" value="TreeGrafter"/>
</dbReference>
<dbReference type="CDD" id="cd01734">
    <property type="entry name" value="YlxS_C"/>
    <property type="match status" value="1"/>
</dbReference>
<dbReference type="Gene3D" id="2.30.30.180">
    <property type="entry name" value="Ribosome maturation factor RimP, C-terminal domain"/>
    <property type="match status" value="1"/>
</dbReference>
<dbReference type="Gene3D" id="3.30.300.70">
    <property type="entry name" value="RimP-like superfamily, N-terminal"/>
    <property type="match status" value="1"/>
</dbReference>
<dbReference type="HAMAP" id="MF_01077">
    <property type="entry name" value="RimP"/>
    <property type="match status" value="1"/>
</dbReference>
<dbReference type="InterPro" id="IPR003728">
    <property type="entry name" value="Ribosome_maturation_RimP"/>
</dbReference>
<dbReference type="InterPro" id="IPR028998">
    <property type="entry name" value="RimP_C"/>
</dbReference>
<dbReference type="InterPro" id="IPR036847">
    <property type="entry name" value="RimP_C_sf"/>
</dbReference>
<dbReference type="InterPro" id="IPR028989">
    <property type="entry name" value="RimP_N"/>
</dbReference>
<dbReference type="InterPro" id="IPR035956">
    <property type="entry name" value="RimP_N_sf"/>
</dbReference>
<dbReference type="NCBIfam" id="NF011232">
    <property type="entry name" value="PRK14639.1"/>
    <property type="match status" value="1"/>
</dbReference>
<dbReference type="PANTHER" id="PTHR33867">
    <property type="entry name" value="RIBOSOME MATURATION FACTOR RIMP"/>
    <property type="match status" value="1"/>
</dbReference>
<dbReference type="PANTHER" id="PTHR33867:SF1">
    <property type="entry name" value="RIBOSOME MATURATION FACTOR RIMP"/>
    <property type="match status" value="1"/>
</dbReference>
<dbReference type="Pfam" id="PF17384">
    <property type="entry name" value="DUF150_C"/>
    <property type="match status" value="1"/>
</dbReference>
<dbReference type="Pfam" id="PF02576">
    <property type="entry name" value="RimP_N"/>
    <property type="match status" value="1"/>
</dbReference>
<dbReference type="SUPFAM" id="SSF74942">
    <property type="entry name" value="YhbC-like, C-terminal domain"/>
    <property type="match status" value="1"/>
</dbReference>
<dbReference type="SUPFAM" id="SSF75420">
    <property type="entry name" value="YhbC-like, N-terminal domain"/>
    <property type="match status" value="1"/>
</dbReference>
<reference key="1">
    <citation type="submission" date="2007-07" db="EMBL/GenBank/DDBJ databases">
        <title>Complete genome sequence of Campylobacter hominis ATCC BAA-381, a commensal isolated from the human gastrointestinal tract.</title>
        <authorList>
            <person name="Fouts D.E."/>
            <person name="Mongodin E.F."/>
            <person name="Puiu D."/>
            <person name="Sebastian Y."/>
            <person name="Miller W.G."/>
            <person name="Mandrell R.E."/>
            <person name="Nelson K.E."/>
        </authorList>
    </citation>
    <scope>NUCLEOTIDE SEQUENCE [LARGE SCALE GENOMIC DNA]</scope>
    <source>
        <strain>ATCC BAA-381 / DSM 21671 / CCUG 45161 / LMG 19568 / NCTC 13146 / CH001A</strain>
    </source>
</reference>
<sequence length="140" mass="15692">MIDLNALCSECGVKFYADELISENSRQIYRVYITKKNGVNLDDCEALSRLLSPILDVEPPTSGAFTLEVSSPGLERKLTTPSNFENSLGELVKITLKNGEKISGEILSFKDEILKLKTAENNEISVNFNEIKKAKTYIEW</sequence>
<proteinExistence type="inferred from homology"/>